<comment type="function">
    <text evidence="1">Part of a membrane-bound complex that couples electron transfer with translocation of ions across the membrane.</text>
</comment>
<comment type="subunit">
    <text evidence="1">The complex is composed of six subunits: RnfA, RnfB, RnfC, RnfD, RnfE and RnfG.</text>
</comment>
<comment type="subcellular location">
    <subcellularLocation>
        <location evidence="1">Cell inner membrane</location>
        <topology evidence="1">Multi-pass membrane protein</topology>
    </subcellularLocation>
</comment>
<comment type="similarity">
    <text evidence="1">Belongs to the NqrDE/RnfAE family.</text>
</comment>
<organism>
    <name type="scientific">Vibrio cholerae serotype O1 (strain ATCC 39315 / El Tor Inaba N16961)</name>
    <dbReference type="NCBI Taxonomy" id="243277"/>
    <lineage>
        <taxon>Bacteria</taxon>
        <taxon>Pseudomonadati</taxon>
        <taxon>Pseudomonadota</taxon>
        <taxon>Gammaproteobacteria</taxon>
        <taxon>Vibrionales</taxon>
        <taxon>Vibrionaceae</taxon>
        <taxon>Vibrio</taxon>
    </lineage>
</organism>
<gene>
    <name evidence="1" type="primary">rnfE</name>
    <name type="ordered locus">VC_1012</name>
</gene>
<name>RNFE_VIBCH</name>
<dbReference type="EC" id="7.-.-.-" evidence="1"/>
<dbReference type="EMBL" id="AE003852">
    <property type="protein sequence ID" value="AAF94173.1"/>
    <property type="molecule type" value="Genomic_DNA"/>
</dbReference>
<dbReference type="PIR" id="B82252">
    <property type="entry name" value="B82252"/>
</dbReference>
<dbReference type="RefSeq" id="NP_230658.1">
    <property type="nucleotide sequence ID" value="NC_002505.1"/>
</dbReference>
<dbReference type="RefSeq" id="WP_001005002.1">
    <property type="nucleotide sequence ID" value="NZ_LT906614.1"/>
</dbReference>
<dbReference type="SMR" id="Q9KT91"/>
<dbReference type="STRING" id="243277.VC_1012"/>
<dbReference type="DNASU" id="2614265"/>
<dbReference type="EnsemblBacteria" id="AAF94173">
    <property type="protein sequence ID" value="AAF94173"/>
    <property type="gene ID" value="VC_1012"/>
</dbReference>
<dbReference type="KEGG" id="vch:VC_1012"/>
<dbReference type="PATRIC" id="fig|243277.26.peg.966"/>
<dbReference type="eggNOG" id="COG4660">
    <property type="taxonomic scope" value="Bacteria"/>
</dbReference>
<dbReference type="HOGENOM" id="CLU_046659_1_0_6"/>
<dbReference type="Proteomes" id="UP000000584">
    <property type="component" value="Chromosome 1"/>
</dbReference>
<dbReference type="GO" id="GO:0005886">
    <property type="term" value="C:plasma membrane"/>
    <property type="evidence" value="ECO:0000318"/>
    <property type="project" value="GO_Central"/>
</dbReference>
<dbReference type="GO" id="GO:0022900">
    <property type="term" value="P:electron transport chain"/>
    <property type="evidence" value="ECO:0007669"/>
    <property type="project" value="UniProtKB-UniRule"/>
</dbReference>
<dbReference type="HAMAP" id="MF_00478">
    <property type="entry name" value="RsxE_RnfE"/>
    <property type="match status" value="1"/>
</dbReference>
<dbReference type="InterPro" id="IPR003667">
    <property type="entry name" value="NqrDE/RnfAE"/>
</dbReference>
<dbReference type="InterPro" id="IPR010968">
    <property type="entry name" value="RnfE"/>
</dbReference>
<dbReference type="NCBIfam" id="NF009070">
    <property type="entry name" value="PRK12405.1"/>
    <property type="match status" value="1"/>
</dbReference>
<dbReference type="NCBIfam" id="TIGR01948">
    <property type="entry name" value="rnfE"/>
    <property type="match status" value="1"/>
</dbReference>
<dbReference type="PANTHER" id="PTHR30586">
    <property type="entry name" value="ELECTRON TRANSPORT COMPLEX PROTEIN RNFE"/>
    <property type="match status" value="1"/>
</dbReference>
<dbReference type="PANTHER" id="PTHR30586:SF0">
    <property type="entry name" value="ION-TRANSLOCATING OXIDOREDUCTASE COMPLEX SUBUNIT E"/>
    <property type="match status" value="1"/>
</dbReference>
<dbReference type="Pfam" id="PF02508">
    <property type="entry name" value="Rnf-Nqr"/>
    <property type="match status" value="1"/>
</dbReference>
<dbReference type="PIRSF" id="PIRSF006102">
    <property type="entry name" value="NQR_DE"/>
    <property type="match status" value="1"/>
</dbReference>
<reference key="1">
    <citation type="journal article" date="2000" name="Nature">
        <title>DNA sequence of both chromosomes of the cholera pathogen Vibrio cholerae.</title>
        <authorList>
            <person name="Heidelberg J.F."/>
            <person name="Eisen J.A."/>
            <person name="Nelson W.C."/>
            <person name="Clayton R.A."/>
            <person name="Gwinn M.L."/>
            <person name="Dodson R.J."/>
            <person name="Haft D.H."/>
            <person name="Hickey E.K."/>
            <person name="Peterson J.D."/>
            <person name="Umayam L.A."/>
            <person name="Gill S.R."/>
            <person name="Nelson K.E."/>
            <person name="Read T.D."/>
            <person name="Tettelin H."/>
            <person name="Richardson D.L."/>
            <person name="Ermolaeva M.D."/>
            <person name="Vamathevan J.J."/>
            <person name="Bass S."/>
            <person name="Qin H."/>
            <person name="Dragoi I."/>
            <person name="Sellers P."/>
            <person name="McDonald L.A."/>
            <person name="Utterback T.R."/>
            <person name="Fleischmann R.D."/>
            <person name="Nierman W.C."/>
            <person name="White O."/>
            <person name="Salzberg S.L."/>
            <person name="Smith H.O."/>
            <person name="Colwell R.R."/>
            <person name="Mekalanos J.J."/>
            <person name="Venter J.C."/>
            <person name="Fraser C.M."/>
        </authorList>
    </citation>
    <scope>NUCLEOTIDE SEQUENCE [LARGE SCALE GENOMIC DNA]</scope>
    <source>
        <strain>ATCC 39315 / El Tor Inaba N16961</strain>
    </source>
</reference>
<accession>Q9KT91</accession>
<proteinExistence type="inferred from homology"/>
<protein>
    <recommendedName>
        <fullName evidence="1">Ion-translocating oxidoreductase complex subunit E</fullName>
        <ecNumber evidence="1">7.-.-.-</ecNumber>
    </recommendedName>
    <alternativeName>
        <fullName evidence="1">Rnf electron transport complex subunit E</fullName>
    </alternativeName>
</protein>
<keyword id="KW-0997">Cell inner membrane</keyword>
<keyword id="KW-1003">Cell membrane</keyword>
<keyword id="KW-0249">Electron transport</keyword>
<keyword id="KW-0472">Membrane</keyword>
<keyword id="KW-1185">Reference proteome</keyword>
<keyword id="KW-1278">Translocase</keyword>
<keyword id="KW-0812">Transmembrane</keyword>
<keyword id="KW-1133">Transmembrane helix</keyword>
<keyword id="KW-0813">Transport</keyword>
<feature type="chain" id="PRO_0000214281" description="Ion-translocating oxidoreductase complex subunit E">
    <location>
        <begin position="1"/>
        <end position="230"/>
    </location>
</feature>
<feature type="transmembrane region" description="Helical" evidence="1">
    <location>
        <begin position="39"/>
        <end position="59"/>
    </location>
</feature>
<feature type="transmembrane region" description="Helical" evidence="1">
    <location>
        <begin position="69"/>
        <end position="89"/>
    </location>
</feature>
<feature type="transmembrane region" description="Helical" evidence="1">
    <location>
        <begin position="93"/>
        <end position="113"/>
    </location>
</feature>
<feature type="transmembrane region" description="Helical" evidence="1">
    <location>
        <begin position="124"/>
        <end position="144"/>
    </location>
</feature>
<feature type="transmembrane region" description="Helical" evidence="1">
    <location>
        <begin position="182"/>
        <end position="202"/>
    </location>
</feature>
<sequence>MNENRTLMLNGMWNNNPALVQLLGLCPLLAVSSTVTNALGLGIATLLVLVGSNVTVSLVRDYVPKEVRIPVFVMIIASLVTCVQLLMNAYAYGLYLSLGIFIPLIVTNCIIIGRAEAFASKNDVLPAALDGFWMGLGMTSVLVVLGSLREIIGNGTLFDGADLLLGEWAKVLRIEVFHFDSAFLLALLPPGAFIGVGFLIAAKSVIDKQTAARQPKQQKQAIERARVTNV</sequence>
<evidence type="ECO:0000255" key="1">
    <source>
        <dbReference type="HAMAP-Rule" id="MF_00478"/>
    </source>
</evidence>